<comment type="function">
    <text evidence="6">Component of the histone chaperone network (PubMed:36930688). Binds and stabilizes histone H3-H4 not bound to chromatin to maintain a soluble reservoir and modulate degradation by chaperone-mediated autophagy (PubMed:36930688). May also bind and stabilize monomeric H3 (PubMed:36930688). Maternal effect gene essential for early embryogenesis (PubMed:36930688).</text>
</comment>
<comment type="subunit">
    <text evidence="6">Interacts with the histone H3-H4 heterodimer; the interaction with H4 is probably indirect and mediated by H3 (His3, His3.3A and His3.3B) (PubMed:36930688). Interacts with His2Av; this interaction directly or indirectly destabilizes His2Av (PubMed:36930688).</text>
</comment>
<comment type="subcellular location">
    <subcellularLocation>
        <location evidence="6">Cytoplasm</location>
    </subcellularLocation>
    <subcellularLocation>
        <location evidence="6">Nucleus</location>
    </subcellularLocation>
    <subcellularLocation>
        <location evidence="6">Cytoplasm</location>
        <location evidence="6">Perinuclear region</location>
    </subcellularLocation>
</comment>
<comment type="disruption phenotype">
    <text evidence="6">Eggs laid by mutant females have reduced viability with evidence of cell cycle defects, and many fail to hatch.</text>
</comment>
<comment type="similarity">
    <text evidence="8">Belongs to the NASP family.</text>
</comment>
<organism evidence="10">
    <name type="scientific">Drosophila melanogaster</name>
    <name type="common">Fruit fly</name>
    <dbReference type="NCBI Taxonomy" id="7227"/>
    <lineage>
        <taxon>Eukaryota</taxon>
        <taxon>Metazoa</taxon>
        <taxon>Ecdysozoa</taxon>
        <taxon>Arthropoda</taxon>
        <taxon>Hexapoda</taxon>
        <taxon>Insecta</taxon>
        <taxon>Pterygota</taxon>
        <taxon>Neoptera</taxon>
        <taxon>Endopterygota</taxon>
        <taxon>Diptera</taxon>
        <taxon>Brachycera</taxon>
        <taxon>Muscomorpha</taxon>
        <taxon>Ephydroidea</taxon>
        <taxon>Drosophilidae</taxon>
        <taxon>Drosophila</taxon>
        <taxon>Sophophora</taxon>
    </lineage>
</organism>
<sequence>MSAEAEAIVTTATADVSSPSKTVAVEPVAADTTPDNAPAVSTEGSGKAEQERAEKILKGKELFSQGSRNFLVKSYDEAADELSQVCQLYEEVYGELADELGQPLLLYAKALIAMALDENKVIDVPDEAADDDDEDVDDDEEESAEDGAAKKEEKKDTKEAANGASSSNGKELDTIKEGSDEADSTGEAEQAQSDEKPSKKVPTGVDEVSSSNGGGGAAVNDDERPSTSNGEVTASCSNGAAPAVEEEPEEEEGVSGSLQLAWEILEAAAQIFSRQGLSGLPYLAEVQTELANIEFENGILEAAREDYEKALKIHGELPTRNRRALAELHYKIGLTYLMQQLNKEGATALRQSSVLIEEEIAEIKGKDEPSERDRNNMLDLEETKQEILAKIQEIEEMQAQTIAEVRAALDSYIKPMSSGDAAAASSSSSSSANGAASSSSSSSKGAAAASSSTISSSSAKPTDITHLIKRKKPEDPSSEAEALCSPAKRAAV</sequence>
<keyword id="KW-0175">Coiled coil</keyword>
<keyword id="KW-0963">Cytoplasm</keyword>
<keyword id="KW-0539">Nucleus</keyword>
<keyword id="KW-0597">Phosphoprotein</keyword>
<keyword id="KW-1185">Reference proteome</keyword>
<keyword id="KW-0677">Repeat</keyword>
<keyword id="KW-0802">TPR repeat</keyword>
<evidence type="ECO:0000255" key="1"/>
<evidence type="ECO:0000255" key="2">
    <source>
        <dbReference type="PROSITE-ProRule" id="PRU00339"/>
    </source>
</evidence>
<evidence type="ECO:0000256" key="3">
    <source>
        <dbReference type="SAM" id="MobiDB-lite"/>
    </source>
</evidence>
<evidence type="ECO:0000269" key="4">
    <source>
    </source>
</evidence>
<evidence type="ECO:0000269" key="5">
    <source>
    </source>
</evidence>
<evidence type="ECO:0000269" key="6">
    <source>
    </source>
</evidence>
<evidence type="ECO:0000303" key="7">
    <source>
    </source>
</evidence>
<evidence type="ECO:0000305" key="8"/>
<evidence type="ECO:0000312" key="9">
    <source>
        <dbReference type="FlyBase" id="FBgn0037624"/>
    </source>
</evidence>
<evidence type="ECO:0000312" key="10">
    <source>
        <dbReference type="Proteomes" id="UP000000803"/>
    </source>
</evidence>
<reference key="1">
    <citation type="journal article" date="2000" name="Science">
        <title>The genome sequence of Drosophila melanogaster.</title>
        <authorList>
            <person name="Adams M.D."/>
            <person name="Celniker S.E."/>
            <person name="Holt R.A."/>
            <person name="Evans C.A."/>
            <person name="Gocayne J.D."/>
            <person name="Amanatides P.G."/>
            <person name="Scherer S.E."/>
            <person name="Li P.W."/>
            <person name="Hoskins R.A."/>
            <person name="Galle R.F."/>
            <person name="George R.A."/>
            <person name="Lewis S.E."/>
            <person name="Richards S."/>
            <person name="Ashburner M."/>
            <person name="Henderson S.N."/>
            <person name="Sutton G.G."/>
            <person name="Wortman J.R."/>
            <person name="Yandell M.D."/>
            <person name="Zhang Q."/>
            <person name="Chen L.X."/>
            <person name="Brandon R.C."/>
            <person name="Rogers Y.-H.C."/>
            <person name="Blazej R.G."/>
            <person name="Champe M."/>
            <person name="Pfeiffer B.D."/>
            <person name="Wan K.H."/>
            <person name="Doyle C."/>
            <person name="Baxter E.G."/>
            <person name="Helt G."/>
            <person name="Nelson C.R."/>
            <person name="Miklos G.L.G."/>
            <person name="Abril J.F."/>
            <person name="Agbayani A."/>
            <person name="An H.-J."/>
            <person name="Andrews-Pfannkoch C."/>
            <person name="Baldwin D."/>
            <person name="Ballew R.M."/>
            <person name="Basu A."/>
            <person name="Baxendale J."/>
            <person name="Bayraktaroglu L."/>
            <person name="Beasley E.M."/>
            <person name="Beeson K.Y."/>
            <person name="Benos P.V."/>
            <person name="Berman B.P."/>
            <person name="Bhandari D."/>
            <person name="Bolshakov S."/>
            <person name="Borkova D."/>
            <person name="Botchan M.R."/>
            <person name="Bouck J."/>
            <person name="Brokstein P."/>
            <person name="Brottier P."/>
            <person name="Burtis K.C."/>
            <person name="Busam D.A."/>
            <person name="Butler H."/>
            <person name="Cadieu E."/>
            <person name="Center A."/>
            <person name="Chandra I."/>
            <person name="Cherry J.M."/>
            <person name="Cawley S."/>
            <person name="Dahlke C."/>
            <person name="Davenport L.B."/>
            <person name="Davies P."/>
            <person name="de Pablos B."/>
            <person name="Delcher A."/>
            <person name="Deng Z."/>
            <person name="Mays A.D."/>
            <person name="Dew I."/>
            <person name="Dietz S.M."/>
            <person name="Dodson K."/>
            <person name="Doup L.E."/>
            <person name="Downes M."/>
            <person name="Dugan-Rocha S."/>
            <person name="Dunkov B.C."/>
            <person name="Dunn P."/>
            <person name="Durbin K.J."/>
            <person name="Evangelista C.C."/>
            <person name="Ferraz C."/>
            <person name="Ferriera S."/>
            <person name="Fleischmann W."/>
            <person name="Fosler C."/>
            <person name="Gabrielian A.E."/>
            <person name="Garg N.S."/>
            <person name="Gelbart W.M."/>
            <person name="Glasser K."/>
            <person name="Glodek A."/>
            <person name="Gong F."/>
            <person name="Gorrell J.H."/>
            <person name="Gu Z."/>
            <person name="Guan P."/>
            <person name="Harris M."/>
            <person name="Harris N.L."/>
            <person name="Harvey D.A."/>
            <person name="Heiman T.J."/>
            <person name="Hernandez J.R."/>
            <person name="Houck J."/>
            <person name="Hostin D."/>
            <person name="Houston K.A."/>
            <person name="Howland T.J."/>
            <person name="Wei M.-H."/>
            <person name="Ibegwam C."/>
            <person name="Jalali M."/>
            <person name="Kalush F."/>
            <person name="Karpen G.H."/>
            <person name="Ke Z."/>
            <person name="Kennison J.A."/>
            <person name="Ketchum K.A."/>
            <person name="Kimmel B.E."/>
            <person name="Kodira C.D."/>
            <person name="Kraft C.L."/>
            <person name="Kravitz S."/>
            <person name="Kulp D."/>
            <person name="Lai Z."/>
            <person name="Lasko P."/>
            <person name="Lei Y."/>
            <person name="Levitsky A.A."/>
            <person name="Li J.H."/>
            <person name="Li Z."/>
            <person name="Liang Y."/>
            <person name="Lin X."/>
            <person name="Liu X."/>
            <person name="Mattei B."/>
            <person name="McIntosh T.C."/>
            <person name="McLeod M.P."/>
            <person name="McPherson D."/>
            <person name="Merkulov G."/>
            <person name="Milshina N.V."/>
            <person name="Mobarry C."/>
            <person name="Morris J."/>
            <person name="Moshrefi A."/>
            <person name="Mount S.M."/>
            <person name="Moy M."/>
            <person name="Murphy B."/>
            <person name="Murphy L."/>
            <person name="Muzny D.M."/>
            <person name="Nelson D.L."/>
            <person name="Nelson D.R."/>
            <person name="Nelson K.A."/>
            <person name="Nixon K."/>
            <person name="Nusskern D.R."/>
            <person name="Pacleb J.M."/>
            <person name="Palazzolo M."/>
            <person name="Pittman G.S."/>
            <person name="Pan S."/>
            <person name="Pollard J."/>
            <person name="Puri V."/>
            <person name="Reese M.G."/>
            <person name="Reinert K."/>
            <person name="Remington K."/>
            <person name="Saunders R.D.C."/>
            <person name="Scheeler F."/>
            <person name="Shen H."/>
            <person name="Shue B.C."/>
            <person name="Siden-Kiamos I."/>
            <person name="Simpson M."/>
            <person name="Skupski M.P."/>
            <person name="Smith T.J."/>
            <person name="Spier E."/>
            <person name="Spradling A.C."/>
            <person name="Stapleton M."/>
            <person name="Strong R."/>
            <person name="Sun E."/>
            <person name="Svirskas R."/>
            <person name="Tector C."/>
            <person name="Turner R."/>
            <person name="Venter E."/>
            <person name="Wang A.H."/>
            <person name="Wang X."/>
            <person name="Wang Z.-Y."/>
            <person name="Wassarman D.A."/>
            <person name="Weinstock G.M."/>
            <person name="Weissenbach J."/>
            <person name="Williams S.M."/>
            <person name="Woodage T."/>
            <person name="Worley K.C."/>
            <person name="Wu D."/>
            <person name="Yang S."/>
            <person name="Yao Q.A."/>
            <person name="Ye J."/>
            <person name="Yeh R.-F."/>
            <person name="Zaveri J.S."/>
            <person name="Zhan M."/>
            <person name="Zhang G."/>
            <person name="Zhao Q."/>
            <person name="Zheng L."/>
            <person name="Zheng X.H."/>
            <person name="Zhong F.N."/>
            <person name="Zhong W."/>
            <person name="Zhou X."/>
            <person name="Zhu S.C."/>
            <person name="Zhu X."/>
            <person name="Smith H.O."/>
            <person name="Gibbs R.A."/>
            <person name="Myers E.W."/>
            <person name="Rubin G.M."/>
            <person name="Venter J.C."/>
        </authorList>
    </citation>
    <scope>NUCLEOTIDE SEQUENCE [LARGE SCALE GENOMIC DNA]</scope>
    <source>
        <strain>Berkeley</strain>
    </source>
</reference>
<reference key="2">
    <citation type="journal article" date="2002" name="Genome Biol.">
        <title>Annotation of the Drosophila melanogaster euchromatic genome: a systematic review.</title>
        <authorList>
            <person name="Misra S."/>
            <person name="Crosby M.A."/>
            <person name="Mungall C.J."/>
            <person name="Matthews B.B."/>
            <person name="Campbell K.S."/>
            <person name="Hradecky P."/>
            <person name="Huang Y."/>
            <person name="Kaminker J.S."/>
            <person name="Millburn G.H."/>
            <person name="Prochnik S.E."/>
            <person name="Smith C.D."/>
            <person name="Tupy J.L."/>
            <person name="Whitfield E.J."/>
            <person name="Bayraktaroglu L."/>
            <person name="Berman B.P."/>
            <person name="Bettencourt B.R."/>
            <person name="Celniker S.E."/>
            <person name="de Grey A.D.N.J."/>
            <person name="Drysdale R.A."/>
            <person name="Harris N.L."/>
            <person name="Richter J."/>
            <person name="Russo S."/>
            <person name="Schroeder A.J."/>
            <person name="Shu S.Q."/>
            <person name="Stapleton M."/>
            <person name="Yamada C."/>
            <person name="Ashburner M."/>
            <person name="Gelbart W.M."/>
            <person name="Rubin G.M."/>
            <person name="Lewis S.E."/>
        </authorList>
    </citation>
    <scope>GENOME REANNOTATION</scope>
    <source>
        <strain>Berkeley</strain>
    </source>
</reference>
<reference key="3">
    <citation type="journal article" date="2002" name="Genome Biol.">
        <title>A Drosophila full-length cDNA resource.</title>
        <authorList>
            <person name="Stapleton M."/>
            <person name="Carlson J.W."/>
            <person name="Brokstein P."/>
            <person name="Yu C."/>
            <person name="Champe M."/>
            <person name="George R.A."/>
            <person name="Guarin H."/>
            <person name="Kronmiller B."/>
            <person name="Pacleb J.M."/>
            <person name="Park S."/>
            <person name="Wan K.H."/>
            <person name="Rubin G.M."/>
            <person name="Celniker S.E."/>
        </authorList>
    </citation>
    <scope>NUCLEOTIDE SEQUENCE [LARGE SCALE MRNA]</scope>
    <source>
        <strain>Berkeley</strain>
        <tissue>Embryo</tissue>
    </source>
</reference>
<reference key="4">
    <citation type="journal article" date="2007" name="Mol. Biosyst.">
        <title>An integrated chemical, mass spectrometric and computational strategy for (quantitative) phosphoproteomics: application to Drosophila melanogaster Kc167 cells.</title>
        <authorList>
            <person name="Bodenmiller B."/>
            <person name="Mueller L.N."/>
            <person name="Pedrioli P.G.A."/>
            <person name="Pflieger D."/>
            <person name="Juenger M.A."/>
            <person name="Eng J.K."/>
            <person name="Aebersold R."/>
            <person name="Tao W.A."/>
        </authorList>
    </citation>
    <scope>PHOSPHORYLATION [LARGE SCALE ANALYSIS] AT SER-485</scope>
    <scope>IDENTIFICATION BY MASS SPECTROMETRY</scope>
</reference>
<reference key="5">
    <citation type="journal article" date="2008" name="J. Proteome Res.">
        <title>Phosphoproteome analysis of Drosophila melanogaster embryos.</title>
        <authorList>
            <person name="Zhai B."/>
            <person name="Villen J."/>
            <person name="Beausoleil S.A."/>
            <person name="Mintseris J."/>
            <person name="Gygi S.P."/>
        </authorList>
    </citation>
    <scope>PHOSPHORYLATION [LARGE SCALE ANALYSIS] AT THR-32; THR-33; SER-179; SER-184; THR-185; SER-193; SER-478 AND SER-485</scope>
    <scope>IDENTIFICATION BY MASS SPECTROMETRY</scope>
    <source>
        <tissue>Embryo</tissue>
    </source>
</reference>
<reference key="6">
    <citation type="journal article" date="2023" name="PLoS Genet.">
        <title>The histone chaperone NASP maintains H3-H4 reservoirs in the early Drosophila embryo.</title>
        <authorList>
            <person name="Tirgar R."/>
            <person name="Davies J.P."/>
            <person name="Plate L."/>
            <person name="Nordman J.T."/>
        </authorList>
    </citation>
    <scope>FUNCTION</scope>
    <scope>INTERACTION WITH HIS3; HIS3.3A; HIS3.3B; HIS4 AND HIS2AV</scope>
    <scope>SUBCELLULAR LOCATION</scope>
    <scope>DISRUPTION PHENOTYPE</scope>
</reference>
<protein>
    <recommendedName>
        <fullName evidence="7">Nuclear autoantigenic sperm protein homolog</fullName>
    </recommendedName>
</protein>
<proteinExistence type="evidence at protein level"/>
<name>NASP_DROME</name>
<feature type="chain" id="PRO_0000372864" description="Nuclear autoantigenic sperm protein homolog">
    <location>
        <begin position="1"/>
        <end position="492"/>
    </location>
</feature>
<feature type="repeat" description="TPR 1" evidence="2">
    <location>
        <begin position="284"/>
        <end position="317"/>
    </location>
</feature>
<feature type="repeat" description="TPR 2" evidence="1">
    <location>
        <begin position="326"/>
        <end position="359"/>
    </location>
</feature>
<feature type="region of interest" description="Disordered" evidence="3">
    <location>
        <begin position="1"/>
        <end position="52"/>
    </location>
</feature>
<feature type="region of interest" description="Disordered" evidence="3">
    <location>
        <begin position="123"/>
        <end position="254"/>
    </location>
</feature>
<feature type="region of interest" description="Disordered" evidence="3">
    <location>
        <begin position="418"/>
        <end position="492"/>
    </location>
</feature>
<feature type="coiled-coil region" evidence="1">
    <location>
        <begin position="377"/>
        <end position="400"/>
    </location>
</feature>
<feature type="compositionally biased region" description="Low complexity" evidence="3">
    <location>
        <begin position="1"/>
        <end position="14"/>
    </location>
</feature>
<feature type="compositionally biased region" description="Acidic residues" evidence="3">
    <location>
        <begin position="124"/>
        <end position="145"/>
    </location>
</feature>
<feature type="compositionally biased region" description="Basic and acidic residues" evidence="3">
    <location>
        <begin position="147"/>
        <end position="159"/>
    </location>
</feature>
<feature type="compositionally biased region" description="Basic and acidic residues" evidence="3">
    <location>
        <begin position="170"/>
        <end position="179"/>
    </location>
</feature>
<feature type="compositionally biased region" description="Polar residues" evidence="3">
    <location>
        <begin position="226"/>
        <end position="238"/>
    </location>
</feature>
<feature type="compositionally biased region" description="Acidic residues" evidence="3">
    <location>
        <begin position="244"/>
        <end position="253"/>
    </location>
</feature>
<feature type="compositionally biased region" description="Low complexity" evidence="3">
    <location>
        <begin position="418"/>
        <end position="459"/>
    </location>
</feature>
<feature type="modified residue" description="Phosphothreonine" evidence="5">
    <location>
        <position position="32"/>
    </location>
</feature>
<feature type="modified residue" description="Phosphothreonine" evidence="5">
    <location>
        <position position="33"/>
    </location>
</feature>
<feature type="modified residue" description="Phosphoserine" evidence="5">
    <location>
        <position position="179"/>
    </location>
</feature>
<feature type="modified residue" description="Phosphoserine" evidence="5">
    <location>
        <position position="184"/>
    </location>
</feature>
<feature type="modified residue" description="Phosphothreonine" evidence="5">
    <location>
        <position position="185"/>
    </location>
</feature>
<feature type="modified residue" description="Phosphoserine" evidence="5">
    <location>
        <position position="193"/>
    </location>
</feature>
<feature type="modified residue" description="Phosphoserine" evidence="5">
    <location>
        <position position="478"/>
    </location>
</feature>
<feature type="modified residue" description="Phosphoserine" evidence="4 5">
    <location>
        <position position="485"/>
    </location>
</feature>
<gene>
    <name evidence="7 9" type="primary">Nasp</name>
    <name evidence="9" type="ORF">CG8223</name>
</gene>
<dbReference type="EMBL" id="AE014297">
    <property type="protein sequence ID" value="AAG22135.1"/>
    <property type="molecule type" value="Genomic_DNA"/>
</dbReference>
<dbReference type="EMBL" id="AE014297">
    <property type="protein sequence ID" value="AFH06311.1"/>
    <property type="molecule type" value="Genomic_DNA"/>
</dbReference>
<dbReference type="EMBL" id="AY069666">
    <property type="protein sequence ID" value="AAL39811.1"/>
    <property type="molecule type" value="mRNA"/>
</dbReference>
<dbReference type="RefSeq" id="NP_001246993.1">
    <property type="nucleotide sequence ID" value="NM_001260064.2"/>
</dbReference>
<dbReference type="RefSeq" id="NP_649828.1">
    <property type="nucleotide sequence ID" value="NM_141571.5"/>
</dbReference>
<dbReference type="SMR" id="Q9I7K6"/>
<dbReference type="BioGRID" id="66220">
    <property type="interactions" value="4"/>
</dbReference>
<dbReference type="FunCoup" id="Q9I7K6">
    <property type="interactions" value="445"/>
</dbReference>
<dbReference type="IntAct" id="Q9I7K6">
    <property type="interactions" value="108"/>
</dbReference>
<dbReference type="MINT" id="Q9I7K6"/>
<dbReference type="STRING" id="7227.FBpp0301016"/>
<dbReference type="iPTMnet" id="Q9I7K6"/>
<dbReference type="PaxDb" id="7227-FBpp0301016"/>
<dbReference type="DNASU" id="41045"/>
<dbReference type="EnsemblMetazoa" id="FBtr0081915">
    <property type="protein sequence ID" value="FBpp0081398"/>
    <property type="gene ID" value="FBgn0037624"/>
</dbReference>
<dbReference type="EnsemblMetazoa" id="FBtr0308889">
    <property type="protein sequence ID" value="FBpp0301016"/>
    <property type="gene ID" value="FBgn0037624"/>
</dbReference>
<dbReference type="GeneID" id="41045"/>
<dbReference type="KEGG" id="dme:Dmel_CG8223"/>
<dbReference type="UCSC" id="CG8223-RA">
    <property type="organism name" value="d. melanogaster"/>
</dbReference>
<dbReference type="AGR" id="FB:FBgn0037624"/>
<dbReference type="CTD" id="4678"/>
<dbReference type="FlyBase" id="FBgn0037624">
    <property type="gene designation" value="Nasp"/>
</dbReference>
<dbReference type="VEuPathDB" id="VectorBase:FBgn0037624"/>
<dbReference type="eggNOG" id="KOG4563">
    <property type="taxonomic scope" value="Eukaryota"/>
</dbReference>
<dbReference type="GeneTree" id="ENSGT00390000016650"/>
<dbReference type="HOGENOM" id="CLU_542136_0_0_1"/>
<dbReference type="InParanoid" id="Q9I7K6"/>
<dbReference type="OMA" id="IAECHYK"/>
<dbReference type="OrthoDB" id="5587616at2759"/>
<dbReference type="PhylomeDB" id="Q9I7K6"/>
<dbReference type="BioGRID-ORCS" id="41045">
    <property type="hits" value="0 hits in 1 CRISPR screen"/>
</dbReference>
<dbReference type="ChiTaRS" id="CG8223">
    <property type="organism name" value="fly"/>
</dbReference>
<dbReference type="GenomeRNAi" id="41045"/>
<dbReference type="PRO" id="PR:Q9I7K6"/>
<dbReference type="Proteomes" id="UP000000803">
    <property type="component" value="Chromosome 3R"/>
</dbReference>
<dbReference type="Bgee" id="FBgn0037624">
    <property type="expression patterns" value="Expressed in saliva-secreting gland and 51 other cell types or tissues"/>
</dbReference>
<dbReference type="ExpressionAtlas" id="Q9I7K6">
    <property type="expression patterns" value="baseline and differential"/>
</dbReference>
<dbReference type="GO" id="GO:0005654">
    <property type="term" value="C:nucleoplasm"/>
    <property type="evidence" value="ECO:0000318"/>
    <property type="project" value="GO_Central"/>
</dbReference>
<dbReference type="GO" id="GO:0005634">
    <property type="term" value="C:nucleus"/>
    <property type="evidence" value="ECO:0000314"/>
    <property type="project" value="FlyBase"/>
</dbReference>
<dbReference type="GO" id="GO:0048471">
    <property type="term" value="C:perinuclear region of cytoplasm"/>
    <property type="evidence" value="ECO:0007669"/>
    <property type="project" value="UniProtKB-SubCell"/>
</dbReference>
<dbReference type="GO" id="GO:0042393">
    <property type="term" value="F:histone binding"/>
    <property type="evidence" value="ECO:0000318"/>
    <property type="project" value="GO_Central"/>
</dbReference>
<dbReference type="GO" id="GO:0140713">
    <property type="term" value="F:histone chaperone activity"/>
    <property type="evidence" value="ECO:0000314"/>
    <property type="project" value="FlyBase"/>
</dbReference>
<dbReference type="GO" id="GO:0034080">
    <property type="term" value="P:CENP-A containing chromatin assembly"/>
    <property type="evidence" value="ECO:0000318"/>
    <property type="project" value="GO_Central"/>
</dbReference>
<dbReference type="GO" id="GO:0006335">
    <property type="term" value="P:DNA replication-dependent chromatin assembly"/>
    <property type="evidence" value="ECO:0000318"/>
    <property type="project" value="GO_Central"/>
</dbReference>
<dbReference type="GO" id="GO:0050821">
    <property type="term" value="P:protein stabilization"/>
    <property type="evidence" value="ECO:0000315"/>
    <property type="project" value="FlyBase"/>
</dbReference>
<dbReference type="FunFam" id="1.25.40.10:FF:001261">
    <property type="entry name" value="Protein NASP homolog"/>
    <property type="match status" value="1"/>
</dbReference>
<dbReference type="Gene3D" id="1.25.40.10">
    <property type="entry name" value="Tetratricopeptide repeat domain"/>
    <property type="match status" value="1"/>
</dbReference>
<dbReference type="InterPro" id="IPR051730">
    <property type="entry name" value="NASP-like"/>
</dbReference>
<dbReference type="InterPro" id="IPR011990">
    <property type="entry name" value="TPR-like_helical_dom_sf"/>
</dbReference>
<dbReference type="InterPro" id="IPR019734">
    <property type="entry name" value="TPR_rpt"/>
</dbReference>
<dbReference type="PANTHER" id="PTHR15081:SF1">
    <property type="entry name" value="NUCLEAR AUTOANTIGENIC SPERM PROTEIN"/>
    <property type="match status" value="1"/>
</dbReference>
<dbReference type="PANTHER" id="PTHR15081">
    <property type="entry name" value="NUCLEAR AUTOANTIGENIC SPERM PROTEIN NASP -RELATED"/>
    <property type="match status" value="1"/>
</dbReference>
<dbReference type="SMART" id="SM00028">
    <property type="entry name" value="TPR"/>
    <property type="match status" value="2"/>
</dbReference>
<dbReference type="SUPFAM" id="SSF48452">
    <property type="entry name" value="TPR-like"/>
    <property type="match status" value="1"/>
</dbReference>
<accession>Q9I7K6</accession>
<accession>A0A126BEE6</accession>